<protein>
    <recommendedName>
        <fullName>Pesticidal crystal protein Cry1Fb</fullName>
    </recommendedName>
    <alternativeName>
        <fullName>132 kDa crystal protein</fullName>
    </alternativeName>
    <alternativeName>
        <fullName>Crystaline entomocidal protoxin</fullName>
    </alternativeName>
    <alternativeName>
        <fullName>Insecticidal delta-endotoxin CryIF(b)</fullName>
    </alternativeName>
</protein>
<comment type="function">
    <text>Promotes colloidosmotic lysis by binding to the midgut epithelial cells of insects.</text>
</comment>
<comment type="developmental stage">
    <text>The crystal protein is produced during sporulation and is accumulated both as an inclusion and as part of the spore coat.</text>
</comment>
<comment type="miscellaneous">
    <text>Toxic segment of the protein is located in the N-terminus.</text>
</comment>
<comment type="similarity">
    <text evidence="1">Belongs to the delta endotoxin family.</text>
</comment>
<gene>
    <name type="primary">cry1Fb</name>
    <name type="synonym">cryIF(b)</name>
    <name type="synonym">cryINA67-1</name>
</gene>
<proteinExistence type="evidence at transcript level"/>
<feature type="chain" id="PRO_0000174043" description="Pesticidal crystal protein Cry1Fb">
    <location>
        <begin position="1"/>
        <end position="1169"/>
    </location>
</feature>
<feature type="sequence conflict" description="In Ref. 2; BAA25298." evidence="1" ref="2">
    <original>V</original>
    <variation>I</variation>
    <location>
        <position position="338"/>
    </location>
</feature>
<feature type="sequence conflict" description="In Ref. 2; BAA25298." evidence="1" ref="2">
    <original>G</original>
    <variation>A</variation>
    <location>
        <position position="382"/>
    </location>
</feature>
<feature type="sequence conflict" description="In Ref. 2; BAA25298." evidence="1" ref="2">
    <original>V</original>
    <variation>I</variation>
    <location>
        <position position="1002"/>
    </location>
</feature>
<feature type="sequence conflict" description="In Ref. 2; BAA25298." evidence="1" ref="2">
    <original>E</original>
    <variation>K</variation>
    <location>
        <position position="1012"/>
    </location>
</feature>
<feature type="sequence conflict" description="In Ref. 2; BAA25298." evidence="1" ref="2">
    <location>
        <position position="1053"/>
    </location>
</feature>
<feature type="sequence conflict" description="In Ref. 2; BAA25298." evidence="1" ref="2">
    <original>G</original>
    <variation>R</variation>
    <location>
        <position position="1085"/>
    </location>
</feature>
<organism>
    <name type="scientific">Bacillus thuringiensis subsp. morrisoni</name>
    <dbReference type="NCBI Taxonomy" id="1441"/>
    <lineage>
        <taxon>Bacteria</taxon>
        <taxon>Bacillati</taxon>
        <taxon>Bacillota</taxon>
        <taxon>Bacilli</taxon>
        <taxon>Bacillales</taxon>
        <taxon>Bacillaceae</taxon>
        <taxon>Bacillus</taxon>
        <taxon>Bacillus cereus group</taxon>
    </lineage>
</organism>
<evidence type="ECO:0000305" key="1"/>
<accession>O66377</accession>
<accession>Q9RC19</accession>
<name>CR1FB_BACTM</name>
<keyword id="KW-0749">Sporulation</keyword>
<keyword id="KW-0800">Toxin</keyword>
<keyword id="KW-0843">Virulence</keyword>
<dbReference type="EMBL" id="AF062350">
    <property type="protein sequence ID" value="AAF21767.1"/>
    <property type="molecule type" value="Genomic_DNA"/>
</dbReference>
<dbReference type="EMBL" id="AB012288">
    <property type="protein sequence ID" value="BAA25298.1"/>
    <property type="molecule type" value="Genomic_DNA"/>
</dbReference>
<dbReference type="SMR" id="O66377"/>
<dbReference type="ABCD" id="O66377">
    <property type="antibodies" value="1 sequenced antibody"/>
</dbReference>
<dbReference type="GO" id="GO:0005102">
    <property type="term" value="F:signaling receptor binding"/>
    <property type="evidence" value="ECO:0007669"/>
    <property type="project" value="InterPro"/>
</dbReference>
<dbReference type="GO" id="GO:0090729">
    <property type="term" value="F:toxin activity"/>
    <property type="evidence" value="ECO:0007669"/>
    <property type="project" value="UniProtKB-KW"/>
</dbReference>
<dbReference type="GO" id="GO:0030435">
    <property type="term" value="P:sporulation resulting in formation of a cellular spore"/>
    <property type="evidence" value="ECO:0007669"/>
    <property type="project" value="UniProtKB-KW"/>
</dbReference>
<dbReference type="GO" id="GO:0001907">
    <property type="term" value="P:symbiont-mediated killing of host cell"/>
    <property type="evidence" value="ECO:0007669"/>
    <property type="project" value="InterPro"/>
</dbReference>
<dbReference type="CDD" id="cd04085">
    <property type="entry name" value="delta_endotoxin_C"/>
    <property type="match status" value="1"/>
</dbReference>
<dbReference type="Gene3D" id="2.60.120.260">
    <property type="entry name" value="Galactose-binding domain-like"/>
    <property type="match status" value="1"/>
</dbReference>
<dbReference type="Gene3D" id="2.100.10.10">
    <property type="entry name" value="Pesticidal crystal protein, central domain"/>
    <property type="match status" value="1"/>
</dbReference>
<dbReference type="Gene3D" id="1.20.190.10">
    <property type="entry name" value="Pesticidal crystal protein, N-terminal domain"/>
    <property type="match status" value="1"/>
</dbReference>
<dbReference type="InterPro" id="IPR048645">
    <property type="entry name" value="Cry1Ac-like_dom-VII"/>
</dbReference>
<dbReference type="InterPro" id="IPR041587">
    <property type="entry name" value="Cry_V"/>
</dbReference>
<dbReference type="InterPro" id="IPR008979">
    <property type="entry name" value="Galactose-bd-like_sf"/>
</dbReference>
<dbReference type="InterPro" id="IPR038979">
    <property type="entry name" value="Pest_crys"/>
</dbReference>
<dbReference type="InterPro" id="IPR005638">
    <property type="entry name" value="Pest_crys_dom-III"/>
</dbReference>
<dbReference type="InterPro" id="IPR005639">
    <property type="entry name" value="Pest_crys_dom_I"/>
</dbReference>
<dbReference type="InterPro" id="IPR036716">
    <property type="entry name" value="Pest_crys_N_sf"/>
</dbReference>
<dbReference type="InterPro" id="IPR036399">
    <property type="entry name" value="Pest_cryst_cen_dom_sf"/>
</dbReference>
<dbReference type="InterPro" id="IPR001178">
    <property type="entry name" value="Pest_cryst_dom_II"/>
</dbReference>
<dbReference type="PANTHER" id="PTHR37003">
    <property type="entry name" value="ENDOTOXIN_N DOMAIN-CONTAINING PROTEIN-RELATED"/>
    <property type="match status" value="1"/>
</dbReference>
<dbReference type="PANTHER" id="PTHR37003:SF2">
    <property type="entry name" value="PESTICIDAL CRYSTAL PROTEIN N-TERMINAL DOMAIN-CONTAINING PROTEIN"/>
    <property type="match status" value="1"/>
</dbReference>
<dbReference type="Pfam" id="PF17997">
    <property type="entry name" value="Cry1Ac_D5"/>
    <property type="match status" value="1"/>
</dbReference>
<dbReference type="Pfam" id="PF21463">
    <property type="entry name" value="Cry1Ac_dom-VII"/>
    <property type="match status" value="1"/>
</dbReference>
<dbReference type="Pfam" id="PF03944">
    <property type="entry name" value="Endotoxin_C"/>
    <property type="match status" value="1"/>
</dbReference>
<dbReference type="Pfam" id="PF00555">
    <property type="entry name" value="Endotoxin_M"/>
    <property type="match status" value="1"/>
</dbReference>
<dbReference type="Pfam" id="PF03945">
    <property type="entry name" value="Endotoxin_N"/>
    <property type="match status" value="1"/>
</dbReference>
<dbReference type="SUPFAM" id="SSF51096">
    <property type="entry name" value="delta-Endotoxin (insectocide), middle domain"/>
    <property type="match status" value="1"/>
</dbReference>
<dbReference type="SUPFAM" id="SSF56849">
    <property type="entry name" value="delta-Endotoxin (insectocide), N-terminal domain"/>
    <property type="match status" value="1"/>
</dbReference>
<dbReference type="SUPFAM" id="SSF49785">
    <property type="entry name" value="Galactose-binding domain-like"/>
    <property type="match status" value="1"/>
</dbReference>
<sequence>MKNNIQNQCVPYNCLSNPEVEILSEERSTGRLPLDISLSLTRFLLSEFVPGVGVAFGLFDLIWGFITPSEWSLFLLQIEQLIEQRIETLERNRAITTLRGLADSYEVYLEALREWEENPNNAQLREDVRIRFANTDDALITAINNFTLTSFEIPLLSVYVQAANLHLSLLRDAVSFGQGWGLDIATVNNHYNRLINLIHRYTEHCLDTYNQGLENLRGTNTRQWSRFNQFRRELTLTVLDIVALFPNYDARAYPIQTSSQLTREIYTSSVIEDSPVSANIPNGFNRAEFGVRPPHLMDFMNSLFVTAETVRSQTVWGGHLVSSRNTAGNPINFPIYGVFNPGGAIWIADEDPRPFYRTLSDPVFVRGGFGNPHYVLGLRGVGFQQTGTNHTRTFRNSGTIDSLDEIPPQDNSGAPWNDYSHVLNHVTFVRWPGEIAGSDSWRAPMFSWTHRSADRTNIINPNIITQIPAVKAHNLHSGSTVVRGPGFTGGDLLRRTNTGTFADIRVNITGPLSQRYRVRIRYASTTDLQFFTRINGTSVNQGNFQRTMNRGGNLESGNFRTAGFSTPFSFSNAQSTFTLGTQAFSNQEVYIDRIEFVPAEVTFEAESDLERAQKAVNALFTSTSQLGLKTNVTGYHIDQVSNLVACLSDEFCLDEKRELSEKVKHAKRLSDKRNLLQDPNFRGINRQPDHGWRGSTDITIQGGDDVFKENYVTLPGTFDECYPTYLYQKIDESKLKAYTRYQLRGYIEDSQDLEIYLIRYNSKHEIVNVPGTGSLWPLSVENQIGPCGEPNRCAPHLEWNPDLHCSCRDGEKCVHHSHHFSLDIDVGCTDLNEDLGVWLIFKIKTQDGHARLGNLEFLEEEPLLGEALARVKRAEKKWRDKREKLQLETNIVYKEAKESVDALFVNSQYDRLQADTNIAMIHAADKRVHRIREAYLPELSVIPGVNAAIFEELEGRIFTAYSLYDARNVIKNGNFNNGLLCWNVKGHVDVEEQNNHRSVLVVPEWEAEVSQEVRVCPGRGYILRVTAYKEGYGEGCVTIHEVDNNTDELKFSSNCEKEQVYPGNTVACNDYNKNHGANACSSRNGGYDESYESNSSIPADYAPVYEEEAYTDGQRGNPCEFNRGHTPLPAGYVTAELEYFPETDTVWVEIGETEGTFIVDSVELLLMEE</sequence>
<reference key="1">
    <citation type="submission" date="1998-04" db="EMBL/GenBank/DDBJ databases">
        <title>A novel cry1Fb gene from Bacillus thuringiensis subsp. morrisoni.</title>
        <authorList>
            <person name="Song F."/>
            <person name="Zhang J."/>
            <person name="Ding Z."/>
            <person name="Chen Z."/>
            <person name="Li G."/>
            <person name="Huang D."/>
        </authorList>
    </citation>
    <scope>NUCLEOTIDE SEQUENCE [GENOMIC DNA]</scope>
</reference>
<reference key="2">
    <citation type="submission" date="1998-03" db="EMBL/GenBank/DDBJ databases">
        <authorList>
            <person name="Masuda K."/>
            <person name="Asano S."/>
        </authorList>
    </citation>
    <scope>NUCLEOTIDE SEQUENCE [GENOMIC DNA]</scope>
    <source>
        <strain>INA67</strain>
    </source>
</reference>